<accession>B1IYQ9</accession>
<name>YIDE_ECOLC</name>
<dbReference type="EMBL" id="CP000946">
    <property type="protein sequence ID" value="ACA75706.1"/>
    <property type="molecule type" value="Genomic_DNA"/>
</dbReference>
<dbReference type="RefSeq" id="WP_001279752.1">
    <property type="nucleotide sequence ID" value="NZ_MTFT01000013.1"/>
</dbReference>
<dbReference type="SMR" id="B1IYQ9"/>
<dbReference type="KEGG" id="ecl:EcolC_0018"/>
<dbReference type="HOGENOM" id="CLU_035023_3_1_6"/>
<dbReference type="GO" id="GO:0005886">
    <property type="term" value="C:plasma membrane"/>
    <property type="evidence" value="ECO:0007669"/>
    <property type="project" value="UniProtKB-SubCell"/>
</dbReference>
<dbReference type="GO" id="GO:0008324">
    <property type="term" value="F:monoatomic cation transmembrane transporter activity"/>
    <property type="evidence" value="ECO:0007669"/>
    <property type="project" value="InterPro"/>
</dbReference>
<dbReference type="GO" id="GO:0006813">
    <property type="term" value="P:potassium ion transport"/>
    <property type="evidence" value="ECO:0007669"/>
    <property type="project" value="InterPro"/>
</dbReference>
<dbReference type="FunFam" id="3.30.70.1450:FF:000004">
    <property type="entry name" value="Putative transport protein YidE"/>
    <property type="match status" value="1"/>
</dbReference>
<dbReference type="Gene3D" id="3.30.70.1450">
    <property type="entry name" value="Regulator of K+ conductance, C-terminal domain"/>
    <property type="match status" value="2"/>
</dbReference>
<dbReference type="HAMAP" id="MF_01016">
    <property type="entry name" value="YidE"/>
    <property type="match status" value="1"/>
</dbReference>
<dbReference type="InterPro" id="IPR050144">
    <property type="entry name" value="AAE_transporter"/>
</dbReference>
<dbReference type="InterPro" id="IPR006037">
    <property type="entry name" value="RCK_C"/>
</dbReference>
<dbReference type="InterPro" id="IPR036721">
    <property type="entry name" value="RCK_C_sf"/>
</dbReference>
<dbReference type="InterPro" id="IPR023018">
    <property type="entry name" value="Transpt_YidE_put"/>
</dbReference>
<dbReference type="InterPro" id="IPR006512">
    <property type="entry name" value="YidE_YbjL"/>
</dbReference>
<dbReference type="NCBIfam" id="NF003007">
    <property type="entry name" value="PRK03818.1"/>
    <property type="match status" value="1"/>
</dbReference>
<dbReference type="NCBIfam" id="TIGR01625">
    <property type="entry name" value="YidE_YbjL_dupl"/>
    <property type="match status" value="2"/>
</dbReference>
<dbReference type="PANTHER" id="PTHR30445">
    <property type="entry name" value="K(+)_H(+) ANTIPORTER SUBUNIT KHTT"/>
    <property type="match status" value="1"/>
</dbReference>
<dbReference type="PANTHER" id="PTHR30445:SF3">
    <property type="entry name" value="TRANSPORT PROTEIN YIDE-RELATED"/>
    <property type="match status" value="1"/>
</dbReference>
<dbReference type="Pfam" id="PF06826">
    <property type="entry name" value="Asp-Al_Ex"/>
    <property type="match status" value="2"/>
</dbReference>
<dbReference type="Pfam" id="PF02080">
    <property type="entry name" value="TrkA_C"/>
    <property type="match status" value="2"/>
</dbReference>
<dbReference type="SUPFAM" id="SSF116726">
    <property type="entry name" value="TrkA C-terminal domain-like"/>
    <property type="match status" value="2"/>
</dbReference>
<dbReference type="PROSITE" id="PS51202">
    <property type="entry name" value="RCK_C"/>
    <property type="match status" value="2"/>
</dbReference>
<gene>
    <name evidence="1" type="primary">yidE</name>
    <name type="ordered locus">EcolC_0018</name>
</gene>
<sequence length="553" mass="58939">MSDIALTVSILALVAVVGLFIGNVKFRGIGLGIGGVLFGGIIVGHFVSQAGMTLSSDMLHVIQEFGLILFVYTIGIQVGPGFFASLRVSGLRLNLFAVLIVIIGGLVTAILHKLFDIPLPVVLGIFSGAVTNTPALGAGQQILRDLGTPMEMVDQMGMSYAMAYPFGICGILFTMWMLRVIFRVNVETEAQQHESSRTNGGALIKTINIRVENPNLHDLAIKDVPILNGDKIICSRLKREETLKVPSPDTIIQLGDLLHLVGQPADLHNAQLVIGQEVDTSLSTKGTDLRVERVVVTNENVLGKRIRDLHFKERYDVVISRLNRAGVELVASGDISLQFGDILNLVGRPSAIDAVANVLGNAQQKLQQVQMLPVFIGIGLGVLLGSIPVFVPGFPAALKLGLAGGPLIMALILGRIGSIGKLYWFMPPSANLALRELGIVLFLSVVGLKSGGDFVNTLVNGEGLSWIGYGALITAVPLITVGILARMLAKMNYLTMCGMLAGSMTDPPALAFANNLHPTSGAAALSYATVYPLVMFLRIITPQLLAVLFWSIG</sequence>
<keyword id="KW-1003">Cell membrane</keyword>
<keyword id="KW-0472">Membrane</keyword>
<keyword id="KW-0677">Repeat</keyword>
<keyword id="KW-0812">Transmembrane</keyword>
<keyword id="KW-1133">Transmembrane helix</keyword>
<keyword id="KW-0813">Transport</keyword>
<proteinExistence type="inferred from homology"/>
<organism>
    <name type="scientific">Escherichia coli (strain ATCC 8739 / DSM 1576 / NBRC 3972 / NCIMB 8545 / WDCM 00012 / Crooks)</name>
    <dbReference type="NCBI Taxonomy" id="481805"/>
    <lineage>
        <taxon>Bacteria</taxon>
        <taxon>Pseudomonadati</taxon>
        <taxon>Pseudomonadota</taxon>
        <taxon>Gammaproteobacteria</taxon>
        <taxon>Enterobacterales</taxon>
        <taxon>Enterobacteriaceae</taxon>
        <taxon>Escherichia</taxon>
    </lineage>
</organism>
<reference key="1">
    <citation type="submission" date="2008-02" db="EMBL/GenBank/DDBJ databases">
        <title>Complete sequence of Escherichia coli C str. ATCC 8739.</title>
        <authorList>
            <person name="Copeland A."/>
            <person name="Lucas S."/>
            <person name="Lapidus A."/>
            <person name="Glavina del Rio T."/>
            <person name="Dalin E."/>
            <person name="Tice H."/>
            <person name="Bruce D."/>
            <person name="Goodwin L."/>
            <person name="Pitluck S."/>
            <person name="Kiss H."/>
            <person name="Brettin T."/>
            <person name="Detter J.C."/>
            <person name="Han C."/>
            <person name="Kuske C.R."/>
            <person name="Schmutz J."/>
            <person name="Larimer F."/>
            <person name="Land M."/>
            <person name="Hauser L."/>
            <person name="Kyrpides N."/>
            <person name="Mikhailova N."/>
            <person name="Ingram L."/>
            <person name="Richardson P."/>
        </authorList>
    </citation>
    <scope>NUCLEOTIDE SEQUENCE [LARGE SCALE GENOMIC DNA]</scope>
    <source>
        <strain>ATCC 8739 / DSM 1576 / NBRC 3972 / NCIMB 8545 / WDCM 00012 / Crooks</strain>
    </source>
</reference>
<protein>
    <recommendedName>
        <fullName evidence="1">Putative transport protein YidE</fullName>
    </recommendedName>
</protein>
<feature type="chain" id="PRO_1000084123" description="Putative transport protein YidE">
    <location>
        <begin position="1"/>
        <end position="553"/>
    </location>
</feature>
<feature type="transmembrane region" description="Helical" evidence="1">
    <location>
        <begin position="4"/>
        <end position="24"/>
    </location>
</feature>
<feature type="transmembrane region" description="Helical" evidence="1">
    <location>
        <begin position="28"/>
        <end position="48"/>
    </location>
</feature>
<feature type="transmembrane region" description="Helical" evidence="1">
    <location>
        <begin position="65"/>
        <end position="85"/>
    </location>
</feature>
<feature type="transmembrane region" description="Helical" evidence="1">
    <location>
        <begin position="95"/>
        <end position="115"/>
    </location>
</feature>
<feature type="transmembrane region" description="Helical" evidence="1">
    <location>
        <begin position="158"/>
        <end position="178"/>
    </location>
</feature>
<feature type="transmembrane region" description="Helical" evidence="1">
    <location>
        <begin position="371"/>
        <end position="391"/>
    </location>
</feature>
<feature type="transmembrane region" description="Helical" evidence="1">
    <location>
        <begin position="393"/>
        <end position="413"/>
    </location>
</feature>
<feature type="transmembrane region" description="Helical" evidence="1">
    <location>
        <begin position="439"/>
        <end position="459"/>
    </location>
</feature>
<feature type="transmembrane region" description="Helical" evidence="1">
    <location>
        <begin position="464"/>
        <end position="484"/>
    </location>
</feature>
<feature type="transmembrane region" description="Helical" evidence="1">
    <location>
        <begin position="493"/>
        <end position="513"/>
    </location>
</feature>
<feature type="transmembrane region" description="Helical" evidence="1">
    <location>
        <begin position="533"/>
        <end position="553"/>
    </location>
</feature>
<feature type="domain" description="RCK C-terminal 1" evidence="1">
    <location>
        <begin position="191"/>
        <end position="276"/>
    </location>
</feature>
<feature type="domain" description="RCK C-terminal 2" evidence="1">
    <location>
        <begin position="279"/>
        <end position="361"/>
    </location>
</feature>
<evidence type="ECO:0000255" key="1">
    <source>
        <dbReference type="HAMAP-Rule" id="MF_01016"/>
    </source>
</evidence>
<comment type="subcellular location">
    <subcellularLocation>
        <location evidence="1">Cell membrane</location>
        <topology evidence="1">Multi-pass membrane protein</topology>
    </subcellularLocation>
</comment>
<comment type="similarity">
    <text evidence="1">Belongs to the AAE transporter (TC 2.A.81) family. YidE subfamily.</text>
</comment>